<accession>A2BZB9</accession>
<comment type="function">
    <text evidence="1">Participates actively in the response to hyperosmotic and heat shock by preventing the aggregation of stress-denatured proteins, in association with DnaK and GrpE. It is the nucleotide exchange factor for DnaK and may function as a thermosensor. Unfolded proteins bind initially to DnaJ; upon interaction with the DnaJ-bound protein, DnaK hydrolyzes its bound ATP, resulting in the formation of a stable complex. GrpE releases ADP from DnaK; ATP binding to DnaK triggers the release of the substrate protein, thus completing the reaction cycle. Several rounds of ATP-dependent interactions between DnaJ, DnaK and GrpE are required for fully efficient folding.</text>
</comment>
<comment type="subunit">
    <text evidence="1">Homodimer.</text>
</comment>
<comment type="subcellular location">
    <subcellularLocation>
        <location evidence="1">Cytoplasm</location>
    </subcellularLocation>
</comment>
<comment type="similarity">
    <text evidence="1">Belongs to the GrpE family.</text>
</comment>
<name>GRPE_PROM1</name>
<proteinExistence type="inferred from homology"/>
<reference key="1">
    <citation type="journal article" date="2007" name="PLoS Genet.">
        <title>Patterns and implications of gene gain and loss in the evolution of Prochlorococcus.</title>
        <authorList>
            <person name="Kettler G.C."/>
            <person name="Martiny A.C."/>
            <person name="Huang K."/>
            <person name="Zucker J."/>
            <person name="Coleman M.L."/>
            <person name="Rodrigue S."/>
            <person name="Chen F."/>
            <person name="Lapidus A."/>
            <person name="Ferriera S."/>
            <person name="Johnson J."/>
            <person name="Steglich C."/>
            <person name="Church G.M."/>
            <person name="Richardson P."/>
            <person name="Chisholm S.W."/>
        </authorList>
    </citation>
    <scope>NUCLEOTIDE SEQUENCE [LARGE SCALE GENOMIC DNA]</scope>
    <source>
        <strain>NATL1A</strain>
    </source>
</reference>
<organism>
    <name type="scientific">Prochlorococcus marinus (strain NATL1A)</name>
    <dbReference type="NCBI Taxonomy" id="167555"/>
    <lineage>
        <taxon>Bacteria</taxon>
        <taxon>Bacillati</taxon>
        <taxon>Cyanobacteriota</taxon>
        <taxon>Cyanophyceae</taxon>
        <taxon>Synechococcales</taxon>
        <taxon>Prochlorococcaceae</taxon>
        <taxon>Prochlorococcus</taxon>
    </lineage>
</organism>
<feature type="chain" id="PRO_1000053614" description="Protein GrpE">
    <location>
        <begin position="1"/>
        <end position="259"/>
    </location>
</feature>
<feature type="region of interest" description="Disordered" evidence="2">
    <location>
        <begin position="1"/>
        <end position="75"/>
    </location>
</feature>
<feature type="region of interest" description="Disordered" evidence="2">
    <location>
        <begin position="227"/>
        <end position="259"/>
    </location>
</feature>
<feature type="compositionally biased region" description="Low complexity" evidence="2">
    <location>
        <begin position="20"/>
        <end position="40"/>
    </location>
</feature>
<feature type="compositionally biased region" description="Basic and acidic residues" evidence="2">
    <location>
        <begin position="46"/>
        <end position="60"/>
    </location>
</feature>
<feature type="compositionally biased region" description="Polar residues" evidence="2">
    <location>
        <begin position="61"/>
        <end position="73"/>
    </location>
</feature>
<protein>
    <recommendedName>
        <fullName evidence="1">Protein GrpE</fullName>
    </recommendedName>
    <alternativeName>
        <fullName evidence="1">HSP-70 cofactor</fullName>
    </alternativeName>
</protein>
<gene>
    <name evidence="1" type="primary">grpE</name>
    <name type="ordered locus">NATL1_00151</name>
</gene>
<dbReference type="EMBL" id="CP000553">
    <property type="protein sequence ID" value="ABM74579.1"/>
    <property type="molecule type" value="Genomic_DNA"/>
</dbReference>
<dbReference type="RefSeq" id="WP_011822817.1">
    <property type="nucleotide sequence ID" value="NC_008819.1"/>
</dbReference>
<dbReference type="SMR" id="A2BZB9"/>
<dbReference type="KEGG" id="pme:NATL1_00151"/>
<dbReference type="eggNOG" id="COG0576">
    <property type="taxonomic scope" value="Bacteria"/>
</dbReference>
<dbReference type="HOGENOM" id="CLU_057217_5_1_3"/>
<dbReference type="Proteomes" id="UP000002592">
    <property type="component" value="Chromosome"/>
</dbReference>
<dbReference type="GO" id="GO:0005737">
    <property type="term" value="C:cytoplasm"/>
    <property type="evidence" value="ECO:0007669"/>
    <property type="project" value="UniProtKB-SubCell"/>
</dbReference>
<dbReference type="GO" id="GO:0000774">
    <property type="term" value="F:adenyl-nucleotide exchange factor activity"/>
    <property type="evidence" value="ECO:0007669"/>
    <property type="project" value="InterPro"/>
</dbReference>
<dbReference type="GO" id="GO:0042803">
    <property type="term" value="F:protein homodimerization activity"/>
    <property type="evidence" value="ECO:0007669"/>
    <property type="project" value="InterPro"/>
</dbReference>
<dbReference type="GO" id="GO:0051087">
    <property type="term" value="F:protein-folding chaperone binding"/>
    <property type="evidence" value="ECO:0007669"/>
    <property type="project" value="InterPro"/>
</dbReference>
<dbReference type="GO" id="GO:0051082">
    <property type="term" value="F:unfolded protein binding"/>
    <property type="evidence" value="ECO:0007669"/>
    <property type="project" value="TreeGrafter"/>
</dbReference>
<dbReference type="GO" id="GO:0006457">
    <property type="term" value="P:protein folding"/>
    <property type="evidence" value="ECO:0007669"/>
    <property type="project" value="InterPro"/>
</dbReference>
<dbReference type="CDD" id="cd00446">
    <property type="entry name" value="GrpE"/>
    <property type="match status" value="1"/>
</dbReference>
<dbReference type="FunFam" id="2.30.22.10:FF:000001">
    <property type="entry name" value="Protein GrpE"/>
    <property type="match status" value="1"/>
</dbReference>
<dbReference type="Gene3D" id="3.90.20.20">
    <property type="match status" value="1"/>
</dbReference>
<dbReference type="Gene3D" id="2.30.22.10">
    <property type="entry name" value="Head domain of nucleotide exchange factor GrpE"/>
    <property type="match status" value="1"/>
</dbReference>
<dbReference type="HAMAP" id="MF_01151">
    <property type="entry name" value="GrpE"/>
    <property type="match status" value="1"/>
</dbReference>
<dbReference type="InterPro" id="IPR000740">
    <property type="entry name" value="GrpE"/>
</dbReference>
<dbReference type="InterPro" id="IPR013805">
    <property type="entry name" value="GrpE_coiled_coil"/>
</dbReference>
<dbReference type="InterPro" id="IPR009012">
    <property type="entry name" value="GrpE_head"/>
</dbReference>
<dbReference type="NCBIfam" id="NF010738">
    <property type="entry name" value="PRK14140.1"/>
    <property type="match status" value="1"/>
</dbReference>
<dbReference type="NCBIfam" id="NF010741">
    <property type="entry name" value="PRK14143.1"/>
    <property type="match status" value="1"/>
</dbReference>
<dbReference type="PANTHER" id="PTHR21237">
    <property type="entry name" value="GRPE PROTEIN"/>
    <property type="match status" value="1"/>
</dbReference>
<dbReference type="PANTHER" id="PTHR21237:SF23">
    <property type="entry name" value="GRPE PROTEIN HOMOLOG, MITOCHONDRIAL"/>
    <property type="match status" value="1"/>
</dbReference>
<dbReference type="Pfam" id="PF01025">
    <property type="entry name" value="GrpE"/>
    <property type="match status" value="1"/>
</dbReference>
<dbReference type="PRINTS" id="PR00773">
    <property type="entry name" value="GRPEPROTEIN"/>
</dbReference>
<dbReference type="SUPFAM" id="SSF58014">
    <property type="entry name" value="Coiled-coil domain of nucleotide exchange factor GrpE"/>
    <property type="match status" value="1"/>
</dbReference>
<dbReference type="SUPFAM" id="SSF51064">
    <property type="entry name" value="Head domain of nucleotide exchange factor GrpE"/>
    <property type="match status" value="1"/>
</dbReference>
<dbReference type="PROSITE" id="PS01071">
    <property type="entry name" value="GRPE"/>
    <property type="match status" value="1"/>
</dbReference>
<keyword id="KW-0143">Chaperone</keyword>
<keyword id="KW-0963">Cytoplasm</keyword>
<keyword id="KW-0346">Stress response</keyword>
<sequence>MNSDVSSSEHELSQDGSSQNNPSENFVSSSNSNESVNQVELSDNPEVEHQVKNDSVDTAKEQSSTSCESNIKGSDTEARLQQLEKEHETLNSQYMRIAADFDNFRKRQTRDQDDLKIQLTCTTLSEILPIVDNFERARQQLNPEGEEAQALHRSYQGLYKQLVEVLKNLGVAPMRVVDQAFDPSLHEAVMREPSDEKAEDIVIEELQRGYHLNGRVLRHALVKVSMGPGPKAVNEEIPDQSASNQELSESVDGPTKDEN</sequence>
<evidence type="ECO:0000255" key="1">
    <source>
        <dbReference type="HAMAP-Rule" id="MF_01151"/>
    </source>
</evidence>
<evidence type="ECO:0000256" key="2">
    <source>
        <dbReference type="SAM" id="MobiDB-lite"/>
    </source>
</evidence>